<sequence>MARPKIALIGAGQIGGTLAHLAAIKELGDVVLFDIAEGTPQGKALDIAQSGPSEGFDAVMKGANSYEEIAGADVCIVTAGVPRKPGMSRDDLIGINLKVMKSVGEGIKAHAPNAFVICITNPLDAMVWALQQFSGLPAEKVVGMAGVLDSARFRHFLSVEFNVSMRDVTAFVLGGHGDTMVPLVRYSTVAGIPLPDLVQMGWTTQEKLDQIVQRTRDGGAEIVGLLKTGSAFYAPATSAIEMAEAYLKDQKRLLPCAAYVDGAFGLNGMYVGVPTIIGAGGIEKIVDIKLNDDEQAMFDKSVNAVKGLVEACKGIDSSLA</sequence>
<protein>
    <recommendedName>
        <fullName evidence="1">Malate dehydrogenase</fullName>
        <ecNumber evidence="1">1.1.1.37</ecNumber>
    </recommendedName>
</protein>
<evidence type="ECO:0000255" key="1">
    <source>
        <dbReference type="HAMAP-Rule" id="MF_00487"/>
    </source>
</evidence>
<organism>
    <name type="scientific">Cereibacter sphaeroides (strain ATCC 17029 / ATH 2.4.9)</name>
    <name type="common">Rhodobacter sphaeroides</name>
    <dbReference type="NCBI Taxonomy" id="349101"/>
    <lineage>
        <taxon>Bacteria</taxon>
        <taxon>Pseudomonadati</taxon>
        <taxon>Pseudomonadota</taxon>
        <taxon>Alphaproteobacteria</taxon>
        <taxon>Rhodobacterales</taxon>
        <taxon>Paracoccaceae</taxon>
        <taxon>Cereibacter</taxon>
    </lineage>
</organism>
<name>MDH_CERS1</name>
<feature type="chain" id="PRO_1000026486" description="Malate dehydrogenase">
    <location>
        <begin position="1"/>
        <end position="320"/>
    </location>
</feature>
<feature type="active site" description="Proton acceptor" evidence="1">
    <location>
        <position position="176"/>
    </location>
</feature>
<feature type="binding site" evidence="1">
    <location>
        <begin position="10"/>
        <end position="15"/>
    </location>
    <ligand>
        <name>NAD(+)</name>
        <dbReference type="ChEBI" id="CHEBI:57540"/>
    </ligand>
</feature>
<feature type="binding site" evidence="1">
    <location>
        <position position="34"/>
    </location>
    <ligand>
        <name>NAD(+)</name>
        <dbReference type="ChEBI" id="CHEBI:57540"/>
    </ligand>
</feature>
<feature type="binding site" evidence="1">
    <location>
        <position position="83"/>
    </location>
    <ligand>
        <name>substrate</name>
    </ligand>
</feature>
<feature type="binding site" evidence="1">
    <location>
        <position position="89"/>
    </location>
    <ligand>
        <name>substrate</name>
    </ligand>
</feature>
<feature type="binding site" evidence="1">
    <location>
        <position position="96"/>
    </location>
    <ligand>
        <name>NAD(+)</name>
        <dbReference type="ChEBI" id="CHEBI:57540"/>
    </ligand>
</feature>
<feature type="binding site" evidence="1">
    <location>
        <begin position="119"/>
        <end position="121"/>
    </location>
    <ligand>
        <name>NAD(+)</name>
        <dbReference type="ChEBI" id="CHEBI:57540"/>
    </ligand>
</feature>
<feature type="binding site" evidence="1">
    <location>
        <position position="121"/>
    </location>
    <ligand>
        <name>substrate</name>
    </ligand>
</feature>
<feature type="binding site" evidence="1">
    <location>
        <position position="152"/>
    </location>
    <ligand>
        <name>substrate</name>
    </ligand>
</feature>
<keyword id="KW-0520">NAD</keyword>
<keyword id="KW-0560">Oxidoreductase</keyword>
<keyword id="KW-0816">Tricarboxylic acid cycle</keyword>
<reference key="1">
    <citation type="submission" date="2007-02" db="EMBL/GenBank/DDBJ databases">
        <title>Complete sequence of chromosome 1 of Rhodobacter sphaeroides ATCC 17029.</title>
        <authorList>
            <person name="Copeland A."/>
            <person name="Lucas S."/>
            <person name="Lapidus A."/>
            <person name="Barry K."/>
            <person name="Detter J.C."/>
            <person name="Glavina del Rio T."/>
            <person name="Hammon N."/>
            <person name="Israni S."/>
            <person name="Dalin E."/>
            <person name="Tice H."/>
            <person name="Pitluck S."/>
            <person name="Kiss H."/>
            <person name="Brettin T."/>
            <person name="Bruce D."/>
            <person name="Han C."/>
            <person name="Tapia R."/>
            <person name="Gilna P."/>
            <person name="Schmutz J."/>
            <person name="Larimer F."/>
            <person name="Land M."/>
            <person name="Hauser L."/>
            <person name="Kyrpides N."/>
            <person name="Mikhailova N."/>
            <person name="Richardson P."/>
            <person name="Mackenzie C."/>
            <person name="Choudhary M."/>
            <person name="Donohue T.J."/>
            <person name="Kaplan S."/>
        </authorList>
    </citation>
    <scope>NUCLEOTIDE SEQUENCE [LARGE SCALE GENOMIC DNA]</scope>
    <source>
        <strain>ATCC 17029 / ATH 2.4.9</strain>
    </source>
</reference>
<proteinExistence type="inferred from homology"/>
<gene>
    <name evidence="1" type="primary">mdh</name>
    <name type="ordered locus">Rsph17029_2628</name>
</gene>
<dbReference type="EC" id="1.1.1.37" evidence="1"/>
<dbReference type="EMBL" id="CP000577">
    <property type="protein sequence ID" value="ABN77730.1"/>
    <property type="molecule type" value="Genomic_DNA"/>
</dbReference>
<dbReference type="RefSeq" id="WP_002721256.1">
    <property type="nucleotide sequence ID" value="NC_009049.1"/>
</dbReference>
<dbReference type="SMR" id="A3PN14"/>
<dbReference type="GeneID" id="67447739"/>
<dbReference type="KEGG" id="rsh:Rsph17029_2628"/>
<dbReference type="HOGENOM" id="CLU_045401_2_1_5"/>
<dbReference type="GO" id="GO:0004459">
    <property type="term" value="F:L-lactate dehydrogenase activity"/>
    <property type="evidence" value="ECO:0007669"/>
    <property type="project" value="TreeGrafter"/>
</dbReference>
<dbReference type="GO" id="GO:0030060">
    <property type="term" value="F:L-malate dehydrogenase (NAD+) activity"/>
    <property type="evidence" value="ECO:0007669"/>
    <property type="project" value="UniProtKB-UniRule"/>
</dbReference>
<dbReference type="GO" id="GO:0006089">
    <property type="term" value="P:lactate metabolic process"/>
    <property type="evidence" value="ECO:0007669"/>
    <property type="project" value="TreeGrafter"/>
</dbReference>
<dbReference type="GO" id="GO:0006099">
    <property type="term" value="P:tricarboxylic acid cycle"/>
    <property type="evidence" value="ECO:0007669"/>
    <property type="project" value="UniProtKB-UniRule"/>
</dbReference>
<dbReference type="CDD" id="cd01339">
    <property type="entry name" value="LDH-like_MDH"/>
    <property type="match status" value="1"/>
</dbReference>
<dbReference type="FunFam" id="3.40.50.720:FF:000018">
    <property type="entry name" value="Malate dehydrogenase"/>
    <property type="match status" value="1"/>
</dbReference>
<dbReference type="FunFam" id="3.90.110.10:FF:000004">
    <property type="entry name" value="Malate dehydrogenase"/>
    <property type="match status" value="1"/>
</dbReference>
<dbReference type="Gene3D" id="3.90.110.10">
    <property type="entry name" value="Lactate dehydrogenase/glycoside hydrolase, family 4, C-terminal"/>
    <property type="match status" value="1"/>
</dbReference>
<dbReference type="Gene3D" id="3.40.50.720">
    <property type="entry name" value="NAD(P)-binding Rossmann-like Domain"/>
    <property type="match status" value="1"/>
</dbReference>
<dbReference type="HAMAP" id="MF_00487">
    <property type="entry name" value="Malate_dehydrog_3"/>
    <property type="match status" value="1"/>
</dbReference>
<dbReference type="InterPro" id="IPR001557">
    <property type="entry name" value="L-lactate/malate_DH"/>
</dbReference>
<dbReference type="InterPro" id="IPR022383">
    <property type="entry name" value="Lactate/malate_DH_C"/>
</dbReference>
<dbReference type="InterPro" id="IPR001236">
    <property type="entry name" value="Lactate/malate_DH_N"/>
</dbReference>
<dbReference type="InterPro" id="IPR015955">
    <property type="entry name" value="Lactate_DH/Glyco_Ohase_4_C"/>
</dbReference>
<dbReference type="InterPro" id="IPR011275">
    <property type="entry name" value="Malate_DH_type3"/>
</dbReference>
<dbReference type="InterPro" id="IPR036291">
    <property type="entry name" value="NAD(P)-bd_dom_sf"/>
</dbReference>
<dbReference type="NCBIfam" id="TIGR01763">
    <property type="entry name" value="MalateDH_bact"/>
    <property type="match status" value="1"/>
</dbReference>
<dbReference type="NCBIfam" id="NF004863">
    <property type="entry name" value="PRK06223.1"/>
    <property type="match status" value="1"/>
</dbReference>
<dbReference type="PANTHER" id="PTHR43128">
    <property type="entry name" value="L-2-HYDROXYCARBOXYLATE DEHYDROGENASE (NAD(P)(+))"/>
    <property type="match status" value="1"/>
</dbReference>
<dbReference type="PANTHER" id="PTHR43128:SF16">
    <property type="entry name" value="L-LACTATE DEHYDROGENASE"/>
    <property type="match status" value="1"/>
</dbReference>
<dbReference type="Pfam" id="PF02866">
    <property type="entry name" value="Ldh_1_C"/>
    <property type="match status" value="1"/>
</dbReference>
<dbReference type="Pfam" id="PF00056">
    <property type="entry name" value="Ldh_1_N"/>
    <property type="match status" value="1"/>
</dbReference>
<dbReference type="PIRSF" id="PIRSF000102">
    <property type="entry name" value="Lac_mal_DH"/>
    <property type="match status" value="1"/>
</dbReference>
<dbReference type="PRINTS" id="PR00086">
    <property type="entry name" value="LLDHDRGNASE"/>
</dbReference>
<dbReference type="SUPFAM" id="SSF56327">
    <property type="entry name" value="LDH C-terminal domain-like"/>
    <property type="match status" value="1"/>
</dbReference>
<dbReference type="SUPFAM" id="SSF51735">
    <property type="entry name" value="NAD(P)-binding Rossmann-fold domains"/>
    <property type="match status" value="1"/>
</dbReference>
<comment type="function">
    <text evidence="1">Catalyzes the reversible oxidation of malate to oxaloacetate.</text>
</comment>
<comment type="catalytic activity">
    <reaction evidence="1">
        <text>(S)-malate + NAD(+) = oxaloacetate + NADH + H(+)</text>
        <dbReference type="Rhea" id="RHEA:21432"/>
        <dbReference type="ChEBI" id="CHEBI:15378"/>
        <dbReference type="ChEBI" id="CHEBI:15589"/>
        <dbReference type="ChEBI" id="CHEBI:16452"/>
        <dbReference type="ChEBI" id="CHEBI:57540"/>
        <dbReference type="ChEBI" id="CHEBI:57945"/>
        <dbReference type="EC" id="1.1.1.37"/>
    </reaction>
</comment>
<comment type="similarity">
    <text evidence="1">Belongs to the LDH/MDH superfamily. MDH type 3 family.</text>
</comment>
<accession>A3PN14</accession>